<proteinExistence type="inferred from homology"/>
<organism>
    <name type="scientific">Lactobacillus acidophilus (strain ATCC 700396 / NCK56 / N2 / NCFM)</name>
    <dbReference type="NCBI Taxonomy" id="272621"/>
    <lineage>
        <taxon>Bacteria</taxon>
        <taxon>Bacillati</taxon>
        <taxon>Bacillota</taxon>
        <taxon>Bacilli</taxon>
        <taxon>Lactobacillales</taxon>
        <taxon>Lactobacillaceae</taxon>
        <taxon>Lactobacillus</taxon>
    </lineage>
</organism>
<name>BGAL_LACAC</name>
<sequence>MQANIKWLDDPEIFRVNQLPAHSDHPFFKNYREWQNNHSSFKQSLNGMWQFKFSKDPQSRPVDFYKKDFNTSSFTTIPVPSEIELNNFAQNQYINTLYPWEGKIFRRPAYALNKSDAEEGSFSEGKDNTVGSYIKHFDLNPELRDHDIHIVFEGAERAMYVWLNGHFIGYAEDSFTPSEFDLTKYIKEKDNILAVEVFKHSTASWLEDQDMFRFSGLFRSVELLAFPETHLVDLDLKPTVCDNYQDGIFNAELKFTGSLNGHVHLSVEDVNGSAILEQDVPLDSEVEFTSSTLENIHLWDNHHPYLYQLLIEVHDENGHLVELIPYQFGFRRIEINQDKVILLNGKCLIINGVNRHEWNAKTGRSITLNDMEKDIDTFKENNINAVRTCHYPNQIPWYYLCDQNGIYMMAENNLESHGTWQKMGQVEPSDNVPGSVPEWREAVIDRARNNYETFKNHTSILFWSLGNESYAGSNIVAMNEFYKEHDSSRLVHYEGVVHRPELKDQISDIESHMYLPPKEVAEYLRNNPQKPFMECEYMHDMGNSDGGMGSYIKLIDEYPQYVGGFIWDFIDQALLVYDPISKQNVLRYGGDFDDRHSDYEFSGDGLMFADRTPKPAMQEVRYYYGLHK</sequence>
<keyword id="KW-0326">Glycosidase</keyword>
<keyword id="KW-0378">Hydrolase</keyword>
<keyword id="KW-1185">Reference proteome</keyword>
<evidence type="ECO:0000250" key="1"/>
<evidence type="ECO:0000250" key="2">
    <source>
        <dbReference type="UniProtKB" id="Q02603"/>
    </source>
</evidence>
<evidence type="ECO:0000305" key="3"/>
<accession>O07684</accession>
<accession>Q5FJ37</accession>
<protein>
    <recommendedName>
        <fullName evidence="2">Beta-galactosidase large subunit</fullName>
        <shortName evidence="2">Beta-gal large subunit</shortName>
        <ecNumber evidence="2">3.2.1.23</ecNumber>
    </recommendedName>
</protein>
<gene>
    <name type="primary">lacL</name>
    <name type="ordered locus">LBA1467</name>
</gene>
<feature type="chain" id="PRO_0000057665" description="Beta-galactosidase large subunit">
    <location>
        <begin position="1"/>
        <end position="628"/>
    </location>
</feature>
<feature type="active site" description="Proton donor" evidence="1">
    <location>
        <position position="468"/>
    </location>
</feature>
<feature type="active site" description="Nucleophile" evidence="1">
    <location>
        <position position="536"/>
    </location>
</feature>
<feature type="sequence conflict" description="In Ref. 1; BAA20536." evidence="3" ref="1">
    <original>H</original>
    <variation>N</variation>
    <location>
        <position position="302"/>
    </location>
</feature>
<comment type="function">
    <text evidence="2">Component of a beta-galactosidase.</text>
</comment>
<comment type="catalytic activity">
    <reaction evidence="2">
        <text>Hydrolysis of terminal non-reducing beta-D-galactose residues in beta-D-galactosides.</text>
        <dbReference type="EC" id="3.2.1.23"/>
    </reaction>
</comment>
<comment type="subunit">
    <text evidence="2">Heterodimer of a large (LacL) and a small subunit (LacM).</text>
</comment>
<comment type="similarity">
    <text evidence="3">Belongs to the glycosyl hydrolase 2 family.</text>
</comment>
<reference key="1">
    <citation type="submission" date="1997-06" db="EMBL/GenBank/DDBJ databases">
        <authorList>
            <person name="Suzuki M."/>
            <person name="Saito T."/>
            <person name="Konno K."/>
            <person name="Kamio Y."/>
            <person name="Itoh T."/>
        </authorList>
    </citation>
    <scope>NUCLEOTIDE SEQUENCE [GENOMIC DNA]</scope>
    <source>
        <strain>JCM 1229 / KCTC 3168</strain>
    </source>
</reference>
<reference key="2">
    <citation type="journal article" date="2005" name="Proc. Natl. Acad. Sci. U.S.A.">
        <title>Complete genome sequence of the probiotic lactic acid bacterium Lactobacillus acidophilus NCFM.</title>
        <authorList>
            <person name="Altermann E."/>
            <person name="Russell W.M."/>
            <person name="Azcarate-Peril M.A."/>
            <person name="Barrangou R."/>
            <person name="Buck B.L."/>
            <person name="McAuliffe O."/>
            <person name="Souther N."/>
            <person name="Dobson A."/>
            <person name="Duong T."/>
            <person name="Callanan M."/>
            <person name="Lick S."/>
            <person name="Hamrick A."/>
            <person name="Cano R."/>
            <person name="Klaenhammer T.R."/>
        </authorList>
    </citation>
    <scope>NUCLEOTIDE SEQUENCE [LARGE SCALE GENOMIC DNA]</scope>
    <source>
        <strain>ATCC 700396 / NCK56 / N2 / NCFM</strain>
    </source>
</reference>
<dbReference type="EC" id="3.2.1.23" evidence="2"/>
<dbReference type="EMBL" id="AB004867">
    <property type="protein sequence ID" value="BAA20536.1"/>
    <property type="molecule type" value="Genomic_DNA"/>
</dbReference>
<dbReference type="EMBL" id="CP000033">
    <property type="protein sequence ID" value="AAV43287.1"/>
    <property type="molecule type" value="Genomic_DNA"/>
</dbReference>
<dbReference type="RefSeq" id="WP_003548184.1">
    <property type="nucleotide sequence ID" value="NC_006814.3"/>
</dbReference>
<dbReference type="RefSeq" id="YP_194318.1">
    <property type="nucleotide sequence ID" value="NC_006814.3"/>
</dbReference>
<dbReference type="SMR" id="O07684"/>
<dbReference type="STRING" id="272621.LBA1467"/>
<dbReference type="CAZy" id="GH2">
    <property type="family name" value="Glycoside Hydrolase Family 2"/>
</dbReference>
<dbReference type="KEGG" id="lac:LBA1467"/>
<dbReference type="PATRIC" id="fig|272621.13.peg.1388"/>
<dbReference type="eggNOG" id="COG3250">
    <property type="taxonomic scope" value="Bacteria"/>
</dbReference>
<dbReference type="HOGENOM" id="CLU_002346_3_2_9"/>
<dbReference type="OrthoDB" id="9762066at2"/>
<dbReference type="BioCyc" id="LACI272621:G1G49-1436-MONOMER"/>
<dbReference type="Proteomes" id="UP000006381">
    <property type="component" value="Chromosome"/>
</dbReference>
<dbReference type="GO" id="GO:0009341">
    <property type="term" value="C:beta-galactosidase complex"/>
    <property type="evidence" value="ECO:0007669"/>
    <property type="project" value="TreeGrafter"/>
</dbReference>
<dbReference type="GO" id="GO:0004565">
    <property type="term" value="F:beta-galactosidase activity"/>
    <property type="evidence" value="ECO:0007669"/>
    <property type="project" value="UniProtKB-EC"/>
</dbReference>
<dbReference type="GO" id="GO:0005990">
    <property type="term" value="P:lactose catabolic process"/>
    <property type="evidence" value="ECO:0007669"/>
    <property type="project" value="TreeGrafter"/>
</dbReference>
<dbReference type="Gene3D" id="2.60.120.260">
    <property type="entry name" value="Galactose-binding domain-like"/>
    <property type="match status" value="1"/>
</dbReference>
<dbReference type="Gene3D" id="3.20.20.80">
    <property type="entry name" value="Glycosidases"/>
    <property type="match status" value="1"/>
</dbReference>
<dbReference type="Gene3D" id="2.60.40.10">
    <property type="entry name" value="Immunoglobulins"/>
    <property type="match status" value="1"/>
</dbReference>
<dbReference type="InterPro" id="IPR050347">
    <property type="entry name" value="Bact_Beta-galactosidase"/>
</dbReference>
<dbReference type="InterPro" id="IPR036156">
    <property type="entry name" value="Beta-gal/glucu_dom_sf"/>
</dbReference>
<dbReference type="InterPro" id="IPR008979">
    <property type="entry name" value="Galactose-bd-like_sf"/>
</dbReference>
<dbReference type="InterPro" id="IPR006101">
    <property type="entry name" value="Glyco_hydro_2"/>
</dbReference>
<dbReference type="InterPro" id="IPR023232">
    <property type="entry name" value="Glyco_hydro_2_AS"/>
</dbReference>
<dbReference type="InterPro" id="IPR006103">
    <property type="entry name" value="Glyco_hydro_2_cat"/>
</dbReference>
<dbReference type="InterPro" id="IPR023230">
    <property type="entry name" value="Glyco_hydro_2_CS"/>
</dbReference>
<dbReference type="InterPro" id="IPR006102">
    <property type="entry name" value="Glyco_hydro_2_Ig-like"/>
</dbReference>
<dbReference type="InterPro" id="IPR006104">
    <property type="entry name" value="Glyco_hydro_2_N"/>
</dbReference>
<dbReference type="InterPro" id="IPR017853">
    <property type="entry name" value="Glycoside_hydrolase_SF"/>
</dbReference>
<dbReference type="InterPro" id="IPR013783">
    <property type="entry name" value="Ig-like_fold"/>
</dbReference>
<dbReference type="PANTHER" id="PTHR46323">
    <property type="entry name" value="BETA-GALACTOSIDASE"/>
    <property type="match status" value="1"/>
</dbReference>
<dbReference type="PANTHER" id="PTHR46323:SF2">
    <property type="entry name" value="BETA-GALACTOSIDASE"/>
    <property type="match status" value="1"/>
</dbReference>
<dbReference type="Pfam" id="PF00703">
    <property type="entry name" value="Glyco_hydro_2"/>
    <property type="match status" value="1"/>
</dbReference>
<dbReference type="Pfam" id="PF02836">
    <property type="entry name" value="Glyco_hydro_2_C"/>
    <property type="match status" value="1"/>
</dbReference>
<dbReference type="Pfam" id="PF02837">
    <property type="entry name" value="Glyco_hydro_2_N"/>
    <property type="match status" value="1"/>
</dbReference>
<dbReference type="PRINTS" id="PR00132">
    <property type="entry name" value="GLHYDRLASE2"/>
</dbReference>
<dbReference type="SUPFAM" id="SSF51445">
    <property type="entry name" value="(Trans)glycosidases"/>
    <property type="match status" value="1"/>
</dbReference>
<dbReference type="SUPFAM" id="SSF49303">
    <property type="entry name" value="beta-Galactosidase/glucuronidase domain"/>
    <property type="match status" value="1"/>
</dbReference>
<dbReference type="SUPFAM" id="SSF49785">
    <property type="entry name" value="Galactose-binding domain-like"/>
    <property type="match status" value="1"/>
</dbReference>
<dbReference type="PROSITE" id="PS00719">
    <property type="entry name" value="GLYCOSYL_HYDROL_F2_1"/>
    <property type="match status" value="1"/>
</dbReference>
<dbReference type="PROSITE" id="PS00608">
    <property type="entry name" value="GLYCOSYL_HYDROL_F2_2"/>
    <property type="match status" value="1"/>
</dbReference>